<comment type="function">
    <text evidence="1">Forms an efflux pump with AaeB.</text>
</comment>
<comment type="subcellular location">
    <subcellularLocation>
        <location evidence="1">Cell inner membrane</location>
        <topology evidence="1">Single-pass membrane protein</topology>
    </subcellularLocation>
</comment>
<comment type="induction">
    <text evidence="1">Positively coregulated with aaeB and aaeX by AaeR.</text>
</comment>
<comment type="similarity">
    <text evidence="1">Belongs to the membrane fusion protein (MFP) (TC 8.A.1) family.</text>
</comment>
<proteinExistence type="inferred from homology"/>
<feature type="chain" id="PRO_1000146718" description="p-hydroxybenzoic acid efflux pump subunit AaeA">
    <location>
        <begin position="1"/>
        <end position="310"/>
    </location>
</feature>
<feature type="transmembrane region" description="Helical" evidence="1">
    <location>
        <begin position="12"/>
        <end position="32"/>
    </location>
</feature>
<name>AAEA_ECOSM</name>
<protein>
    <recommendedName>
        <fullName evidence="1">p-hydroxybenzoic acid efflux pump subunit AaeA</fullName>
        <shortName evidence="1">pHBA efflux pump protein A</shortName>
    </recommendedName>
</protein>
<gene>
    <name evidence="1" type="primary">aaeA</name>
    <name type="ordered locus">EcSMS35_3537</name>
</gene>
<reference key="1">
    <citation type="journal article" date="2008" name="J. Bacteriol.">
        <title>Insights into the environmental resistance gene pool from the genome sequence of the multidrug-resistant environmental isolate Escherichia coli SMS-3-5.</title>
        <authorList>
            <person name="Fricke W.F."/>
            <person name="Wright M.S."/>
            <person name="Lindell A.H."/>
            <person name="Harkins D.M."/>
            <person name="Baker-Austin C."/>
            <person name="Ravel J."/>
            <person name="Stepanauskas R."/>
        </authorList>
    </citation>
    <scope>NUCLEOTIDE SEQUENCE [LARGE SCALE GENOMIC DNA]</scope>
    <source>
        <strain>SMS-3-5 / SECEC</strain>
    </source>
</reference>
<evidence type="ECO:0000255" key="1">
    <source>
        <dbReference type="HAMAP-Rule" id="MF_01544"/>
    </source>
</evidence>
<sequence length="310" mass="34761">MKTLIRKFSRTAITVVLVILAFIAIFNAWVYYTESPWTRDARFSADVVAIAPDVSGLITQVNVHDNQLVKKGQVLFTIDQPRYQKALEEAQADVAYYQVLAQEKRQEAGRRNRLGVQAMSREEIDQANNVLQTVLHQLAKAQATRDLAKLDLERTVIRAPADGWVTNLNVYTGEFITRGSTAVALVKQNSFYVLAYMEETKLEGVRPGYRAEITPLGSNKVLKGTVDSVAAGVTNASSTRDDKGMATIDSNLEWVRLAQRVPVRIRLDNQQENIWPAGTTATVVVTGKQDRDESQDSFFRKMAHRLREFG</sequence>
<dbReference type="EMBL" id="CP000970">
    <property type="protein sequence ID" value="ACB18923.1"/>
    <property type="molecule type" value="Genomic_DNA"/>
</dbReference>
<dbReference type="RefSeq" id="WP_000854033.1">
    <property type="nucleotide sequence ID" value="NC_010498.1"/>
</dbReference>
<dbReference type="SMR" id="B1LGK7"/>
<dbReference type="KEGG" id="ecm:EcSMS35_3537"/>
<dbReference type="HOGENOM" id="CLU_018816_15_2_6"/>
<dbReference type="Proteomes" id="UP000007011">
    <property type="component" value="Chromosome"/>
</dbReference>
<dbReference type="GO" id="GO:0005886">
    <property type="term" value="C:plasma membrane"/>
    <property type="evidence" value="ECO:0007669"/>
    <property type="project" value="UniProtKB-SubCell"/>
</dbReference>
<dbReference type="GO" id="GO:0022857">
    <property type="term" value="F:transmembrane transporter activity"/>
    <property type="evidence" value="ECO:0007669"/>
    <property type="project" value="UniProtKB-UniRule"/>
</dbReference>
<dbReference type="FunFam" id="2.40.30.170:FF:000002">
    <property type="entry name" value="p-hydroxybenzoic acid efflux pump subunit AaeA"/>
    <property type="match status" value="1"/>
</dbReference>
<dbReference type="FunFam" id="2.40.50.100:FF:000018">
    <property type="entry name" value="p-hydroxybenzoic acid efflux pump subunit AaeA"/>
    <property type="match status" value="1"/>
</dbReference>
<dbReference type="Gene3D" id="2.40.30.170">
    <property type="match status" value="1"/>
</dbReference>
<dbReference type="Gene3D" id="2.40.50.100">
    <property type="match status" value="1"/>
</dbReference>
<dbReference type="HAMAP" id="MF_01544">
    <property type="entry name" value="AaeA"/>
    <property type="match status" value="1"/>
</dbReference>
<dbReference type="InterPro" id="IPR043602">
    <property type="entry name" value="CusB-like_dom_1"/>
</dbReference>
<dbReference type="InterPro" id="IPR032317">
    <property type="entry name" value="CusB_D23"/>
</dbReference>
<dbReference type="InterPro" id="IPR050393">
    <property type="entry name" value="MFP_Efflux_Pump"/>
</dbReference>
<dbReference type="InterPro" id="IPR022871">
    <property type="entry name" value="PHBA_efflux_pump_AaeA"/>
</dbReference>
<dbReference type="InterPro" id="IPR006143">
    <property type="entry name" value="RND_pump_MFP"/>
</dbReference>
<dbReference type="NCBIfam" id="NF007850">
    <property type="entry name" value="PRK10559.1"/>
    <property type="match status" value="1"/>
</dbReference>
<dbReference type="NCBIfam" id="TIGR01730">
    <property type="entry name" value="RND_mfp"/>
    <property type="match status" value="1"/>
</dbReference>
<dbReference type="PANTHER" id="PTHR30367:SF12">
    <property type="entry name" value="P-HYDROXYBENZOIC ACID EFFLUX PUMP SUBUNIT AAEA"/>
    <property type="match status" value="1"/>
</dbReference>
<dbReference type="PANTHER" id="PTHR30367">
    <property type="entry name" value="P-HYDROXYBENZOIC ACID EFFLUX PUMP SUBUNIT AAEA-RELATED"/>
    <property type="match status" value="1"/>
</dbReference>
<dbReference type="Pfam" id="PF00529">
    <property type="entry name" value="CusB_dom_1"/>
    <property type="match status" value="1"/>
</dbReference>
<dbReference type="Pfam" id="PF16576">
    <property type="entry name" value="HlyD_D23"/>
    <property type="match status" value="1"/>
</dbReference>
<dbReference type="SUPFAM" id="SSF111369">
    <property type="entry name" value="HlyD-like secretion proteins"/>
    <property type="match status" value="1"/>
</dbReference>
<accession>B1LGK7</accession>
<organism>
    <name type="scientific">Escherichia coli (strain SMS-3-5 / SECEC)</name>
    <dbReference type="NCBI Taxonomy" id="439855"/>
    <lineage>
        <taxon>Bacteria</taxon>
        <taxon>Pseudomonadati</taxon>
        <taxon>Pseudomonadota</taxon>
        <taxon>Gammaproteobacteria</taxon>
        <taxon>Enterobacterales</taxon>
        <taxon>Enterobacteriaceae</taxon>
        <taxon>Escherichia</taxon>
    </lineage>
</organism>
<keyword id="KW-0997">Cell inner membrane</keyword>
<keyword id="KW-1003">Cell membrane</keyword>
<keyword id="KW-0472">Membrane</keyword>
<keyword id="KW-0812">Transmembrane</keyword>
<keyword id="KW-1133">Transmembrane helix</keyword>
<keyword id="KW-0813">Transport</keyword>